<gene>
    <name type="primary">SARG</name>
    <name type="synonym">C1orf116</name>
</gene>
<accession>Q9BW04</accession>
<accession>C9JV41</accession>
<accession>Q658X3</accession>
<protein>
    <recommendedName>
        <fullName>Specifically androgen-regulated gene protein</fullName>
    </recommendedName>
</protein>
<proteinExistence type="evidence at protein level"/>
<comment type="function">
    <text evidence="4">Putative androgen-specific receptor.</text>
</comment>
<comment type="interaction">
    <interactant intactId="EBI-2320464">
        <id>Q9BW04</id>
    </interactant>
    <interactant intactId="EBI-746815">
        <id>Q86YM7</id>
        <label>HOMER1</label>
    </interactant>
    <organismsDiffer>false</organismsDiffer>
    <experiments>7</experiments>
</comment>
<comment type="interaction">
    <interactant intactId="EBI-2320464">
        <id>Q9BW04</id>
    </interactant>
    <interactant intactId="EBI-748420">
        <id>Q9NSC5</id>
        <label>HOMER3</label>
    </interactant>
    <organismsDiffer>false</organismsDiffer>
    <experiments>3</experiments>
</comment>
<comment type="subcellular location">
    <subcellularLocation>
        <location evidence="4">Cytoplasm</location>
    </subcellularLocation>
</comment>
<comment type="alternative products">
    <event type="alternative splicing"/>
    <isoform>
        <id>Q9BW04-1</id>
        <name>1</name>
        <sequence type="displayed"/>
    </isoform>
    <isoform>
        <id>Q9BW04-2</id>
        <name>2</name>
        <sequence type="described" ref="VSP_031228"/>
    </isoform>
    <text>Additional isoforms seem to exist.</text>
</comment>
<comment type="tissue specificity">
    <text evidence="4">Highly expressed in prostate.</text>
</comment>
<comment type="induction">
    <text>Expression is up-regulated by androgen, but not by glucocorticoids.</text>
</comment>
<comment type="similarity">
    <text evidence="8">Belongs to the SARG family.</text>
</comment>
<dbReference type="EMBL" id="AY352640">
    <property type="protein sequence ID" value="AAR11484.1"/>
    <property type="molecule type" value="mRNA"/>
</dbReference>
<dbReference type="EMBL" id="AK093826">
    <property type="protein sequence ID" value="BAC04233.1"/>
    <property type="molecule type" value="mRNA"/>
</dbReference>
<dbReference type="EMBL" id="AC098935">
    <property type="status" value="NOT_ANNOTATED_CDS"/>
    <property type="molecule type" value="Genomic_DNA"/>
</dbReference>
<dbReference type="EMBL" id="CH471100">
    <property type="protein sequence ID" value="EAW93511.1"/>
    <property type="molecule type" value="Genomic_DNA"/>
</dbReference>
<dbReference type="EMBL" id="BC000765">
    <property type="protein sequence ID" value="AAH00765.1"/>
    <property type="molecule type" value="mRNA"/>
</dbReference>
<dbReference type="EMBL" id="AL832940">
    <property type="protein sequence ID" value="CAH56284.1"/>
    <property type="molecule type" value="mRNA"/>
</dbReference>
<dbReference type="CCDS" id="CCDS1475.1">
    <molecule id="Q9BW04-1"/>
</dbReference>
<dbReference type="CCDS" id="CCDS44306.1">
    <molecule id="Q9BW04-2"/>
</dbReference>
<dbReference type="RefSeq" id="NP_001077393.1">
    <molecule id="Q9BW04-2"/>
    <property type="nucleotide sequence ID" value="NM_001083924.1"/>
</dbReference>
<dbReference type="RefSeq" id="NP_076427.2">
    <molecule id="Q9BW04-1"/>
    <property type="nucleotide sequence ID" value="NM_023938.5"/>
</dbReference>
<dbReference type="RefSeq" id="XP_005273316.1">
    <molecule id="Q9BW04-2"/>
    <property type="nucleotide sequence ID" value="XM_005273259.1"/>
</dbReference>
<dbReference type="RefSeq" id="XP_006711593.1">
    <molecule id="Q9BW04-1"/>
    <property type="nucleotide sequence ID" value="XM_006711530.1"/>
</dbReference>
<dbReference type="RefSeq" id="XP_011508275.1">
    <molecule id="Q9BW04-2"/>
    <property type="nucleotide sequence ID" value="XM_011509973.2"/>
</dbReference>
<dbReference type="BioGRID" id="122545">
    <property type="interactions" value="24"/>
</dbReference>
<dbReference type="FunCoup" id="Q9BW04">
    <property type="interactions" value="277"/>
</dbReference>
<dbReference type="IntAct" id="Q9BW04">
    <property type="interactions" value="9"/>
</dbReference>
<dbReference type="MINT" id="Q9BW04"/>
<dbReference type="STRING" id="9606.ENSP00000352447"/>
<dbReference type="GlyGen" id="Q9BW04">
    <property type="glycosylation" value="1 site, 1 O-linked glycan (1 site)"/>
</dbReference>
<dbReference type="iPTMnet" id="Q9BW04"/>
<dbReference type="PhosphoSitePlus" id="Q9BW04"/>
<dbReference type="BioMuta" id="C1orf116"/>
<dbReference type="DMDM" id="296452897"/>
<dbReference type="jPOST" id="Q9BW04"/>
<dbReference type="MassIVE" id="Q9BW04"/>
<dbReference type="PaxDb" id="9606-ENSP00000352447"/>
<dbReference type="PeptideAtlas" id="Q9BW04"/>
<dbReference type="ProteomicsDB" id="79245">
    <molecule id="Q9BW04-1"/>
</dbReference>
<dbReference type="ProteomicsDB" id="79246">
    <molecule id="Q9BW04-2"/>
</dbReference>
<dbReference type="Pumba" id="Q9BW04"/>
<dbReference type="Antibodypedia" id="1991">
    <property type="antibodies" value="66 antibodies from 19 providers"/>
</dbReference>
<dbReference type="DNASU" id="79098"/>
<dbReference type="Ensembl" id="ENST00000359470.6">
    <molecule id="Q9BW04-1"/>
    <property type="protein sequence ID" value="ENSP00000352447.5"/>
    <property type="gene ID" value="ENSG00000182795.13"/>
</dbReference>
<dbReference type="Ensembl" id="ENST00000461135.2">
    <molecule id="Q9BW04-2"/>
    <property type="protein sequence ID" value="ENSP00000436862.1"/>
    <property type="gene ID" value="ENSG00000182795.13"/>
</dbReference>
<dbReference type="GeneID" id="79098"/>
<dbReference type="KEGG" id="hsa:79098"/>
<dbReference type="MANE-Select" id="ENST00000359470.6">
    <property type="protein sequence ID" value="ENSP00000352447.5"/>
    <property type="RefSeq nucleotide sequence ID" value="NM_023938.6"/>
    <property type="RefSeq protein sequence ID" value="NP_076427.2"/>
</dbReference>
<dbReference type="UCSC" id="uc001hfd.3">
    <molecule id="Q9BW04-1"/>
    <property type="organism name" value="human"/>
</dbReference>
<dbReference type="AGR" id="HGNC:28667"/>
<dbReference type="CTD" id="79098"/>
<dbReference type="DisGeNET" id="79098"/>
<dbReference type="GeneCards" id="C1orf116"/>
<dbReference type="HGNC" id="HGNC:28667">
    <property type="gene designation" value="C1orf116"/>
</dbReference>
<dbReference type="HPA" id="ENSG00000182795">
    <property type="expression patterns" value="Tissue enhanced (esophagus, lung, stomach)"/>
</dbReference>
<dbReference type="MIM" id="611680">
    <property type="type" value="gene"/>
</dbReference>
<dbReference type="neXtProt" id="NX_Q9BW04"/>
<dbReference type="OpenTargets" id="ENSG00000182795"/>
<dbReference type="PharmGKB" id="PA142672500"/>
<dbReference type="VEuPathDB" id="HostDB:ENSG00000182795"/>
<dbReference type="eggNOG" id="ENOG502RGW5">
    <property type="taxonomic scope" value="Eukaryota"/>
</dbReference>
<dbReference type="GeneTree" id="ENSGT00390000017874"/>
<dbReference type="HOGENOM" id="CLU_035136_0_0_1"/>
<dbReference type="InParanoid" id="Q9BW04"/>
<dbReference type="OMA" id="HSEPQSW"/>
<dbReference type="OrthoDB" id="9898538at2759"/>
<dbReference type="PAN-GO" id="Q9BW04">
    <property type="GO annotations" value="1 GO annotation based on evolutionary models"/>
</dbReference>
<dbReference type="PhylomeDB" id="Q9BW04"/>
<dbReference type="TreeFam" id="TF336615"/>
<dbReference type="PathwayCommons" id="Q9BW04"/>
<dbReference type="SignaLink" id="Q9BW04"/>
<dbReference type="BioGRID-ORCS" id="79098">
    <property type="hits" value="8 hits in 1132 CRISPR screens"/>
</dbReference>
<dbReference type="ChiTaRS" id="C1orf116">
    <property type="organism name" value="human"/>
</dbReference>
<dbReference type="GenomeRNAi" id="79098"/>
<dbReference type="Pharos" id="Q9BW04">
    <property type="development level" value="Tbio"/>
</dbReference>
<dbReference type="PRO" id="PR:Q9BW04"/>
<dbReference type="Proteomes" id="UP000005640">
    <property type="component" value="Chromosome 1"/>
</dbReference>
<dbReference type="RNAct" id="Q9BW04">
    <property type="molecule type" value="protein"/>
</dbReference>
<dbReference type="Bgee" id="ENSG00000182795">
    <property type="expression patterns" value="Expressed in pancreatic ductal cell and 127 other cell types or tissues"/>
</dbReference>
<dbReference type="GO" id="GO:0005737">
    <property type="term" value="C:cytoplasm"/>
    <property type="evidence" value="ECO:0000314"/>
    <property type="project" value="UniProtKB"/>
</dbReference>
<dbReference type="GO" id="GO:0005829">
    <property type="term" value="C:cytosol"/>
    <property type="evidence" value="ECO:0000314"/>
    <property type="project" value="HPA"/>
</dbReference>
<dbReference type="GO" id="GO:0070062">
    <property type="term" value="C:extracellular exosome"/>
    <property type="evidence" value="ECO:0007005"/>
    <property type="project" value="UniProtKB"/>
</dbReference>
<dbReference type="GO" id="GO:0005886">
    <property type="term" value="C:plasma membrane"/>
    <property type="evidence" value="ECO:0000314"/>
    <property type="project" value="HPA"/>
</dbReference>
<dbReference type="InterPro" id="IPR026152">
    <property type="entry name" value="SARG"/>
</dbReference>
<dbReference type="PANTHER" id="PTHR21555">
    <property type="entry name" value="SPECIFICALLY ANDROGEN-REGULATED GENE PROTEIN"/>
    <property type="match status" value="1"/>
</dbReference>
<dbReference type="PANTHER" id="PTHR21555:SF0">
    <property type="entry name" value="SPECIFICALLY ANDROGEN-REGULATED GENE PROTEIN"/>
    <property type="match status" value="1"/>
</dbReference>
<dbReference type="Pfam" id="PF15385">
    <property type="entry name" value="SARG"/>
    <property type="match status" value="1"/>
</dbReference>
<reference key="1">
    <citation type="journal article" date="2004" name="J. Mol. Endocrinol.">
        <title>A bioinformatics-based functional analysis shows that the specifically androgen-regulated gene SARG contains an active direct repeat androgen response element in the first intron.</title>
        <authorList>
            <person name="Steketee K."/>
            <person name="Ziel-van der Made A.C."/>
            <person name="van der Korput H.A."/>
            <person name="Houtsmuller A.B."/>
            <person name="Trapman J."/>
        </authorList>
    </citation>
    <scope>NUCLEOTIDE SEQUENCE [MRNA] (ISOFORMS 1 AND 2)</scope>
    <scope>FUNCTION</scope>
    <scope>SUBCELLULAR LOCATION</scope>
    <scope>ALTERNATIVE SPLICING</scope>
    <scope>TISSUE SPECIFICITY</scope>
    <scope>VARIANT PRO-444</scope>
    <source>
        <tissue>Prostatic adenocarcinoma</tissue>
    </source>
</reference>
<reference key="2">
    <citation type="journal article" date="2004" name="Nat. Genet.">
        <title>Complete sequencing and characterization of 21,243 full-length human cDNAs.</title>
        <authorList>
            <person name="Ota T."/>
            <person name="Suzuki Y."/>
            <person name="Nishikawa T."/>
            <person name="Otsuki T."/>
            <person name="Sugiyama T."/>
            <person name="Irie R."/>
            <person name="Wakamatsu A."/>
            <person name="Hayashi K."/>
            <person name="Sato H."/>
            <person name="Nagai K."/>
            <person name="Kimura K."/>
            <person name="Makita H."/>
            <person name="Sekine M."/>
            <person name="Obayashi M."/>
            <person name="Nishi T."/>
            <person name="Shibahara T."/>
            <person name="Tanaka T."/>
            <person name="Ishii S."/>
            <person name="Yamamoto J."/>
            <person name="Saito K."/>
            <person name="Kawai Y."/>
            <person name="Isono Y."/>
            <person name="Nakamura Y."/>
            <person name="Nagahari K."/>
            <person name="Murakami K."/>
            <person name="Yasuda T."/>
            <person name="Iwayanagi T."/>
            <person name="Wagatsuma M."/>
            <person name="Shiratori A."/>
            <person name="Sudo H."/>
            <person name="Hosoiri T."/>
            <person name="Kaku Y."/>
            <person name="Kodaira H."/>
            <person name="Kondo H."/>
            <person name="Sugawara M."/>
            <person name="Takahashi M."/>
            <person name="Kanda K."/>
            <person name="Yokoi T."/>
            <person name="Furuya T."/>
            <person name="Kikkawa E."/>
            <person name="Omura Y."/>
            <person name="Abe K."/>
            <person name="Kamihara K."/>
            <person name="Katsuta N."/>
            <person name="Sato K."/>
            <person name="Tanikawa M."/>
            <person name="Yamazaki M."/>
            <person name="Ninomiya K."/>
            <person name="Ishibashi T."/>
            <person name="Yamashita H."/>
            <person name="Murakawa K."/>
            <person name="Fujimori K."/>
            <person name="Tanai H."/>
            <person name="Kimata M."/>
            <person name="Watanabe M."/>
            <person name="Hiraoka S."/>
            <person name="Chiba Y."/>
            <person name="Ishida S."/>
            <person name="Ono Y."/>
            <person name="Takiguchi S."/>
            <person name="Watanabe S."/>
            <person name="Yosida M."/>
            <person name="Hotuta T."/>
            <person name="Kusano J."/>
            <person name="Kanehori K."/>
            <person name="Takahashi-Fujii A."/>
            <person name="Hara H."/>
            <person name="Tanase T.-O."/>
            <person name="Nomura Y."/>
            <person name="Togiya S."/>
            <person name="Komai F."/>
            <person name="Hara R."/>
            <person name="Takeuchi K."/>
            <person name="Arita M."/>
            <person name="Imose N."/>
            <person name="Musashino K."/>
            <person name="Yuuki H."/>
            <person name="Oshima A."/>
            <person name="Sasaki N."/>
            <person name="Aotsuka S."/>
            <person name="Yoshikawa Y."/>
            <person name="Matsunawa H."/>
            <person name="Ichihara T."/>
            <person name="Shiohata N."/>
            <person name="Sano S."/>
            <person name="Moriya S."/>
            <person name="Momiyama H."/>
            <person name="Satoh N."/>
            <person name="Takami S."/>
            <person name="Terashima Y."/>
            <person name="Suzuki O."/>
            <person name="Nakagawa S."/>
            <person name="Senoh A."/>
            <person name="Mizoguchi H."/>
            <person name="Goto Y."/>
            <person name="Shimizu F."/>
            <person name="Wakebe H."/>
            <person name="Hishigaki H."/>
            <person name="Watanabe T."/>
            <person name="Sugiyama A."/>
            <person name="Takemoto M."/>
            <person name="Kawakami B."/>
            <person name="Yamazaki M."/>
            <person name="Watanabe K."/>
            <person name="Kumagai A."/>
            <person name="Itakura S."/>
            <person name="Fukuzumi Y."/>
            <person name="Fujimori Y."/>
            <person name="Komiyama M."/>
            <person name="Tashiro H."/>
            <person name="Tanigami A."/>
            <person name="Fujiwara T."/>
            <person name="Ono T."/>
            <person name="Yamada K."/>
            <person name="Fujii Y."/>
            <person name="Ozaki K."/>
            <person name="Hirao M."/>
            <person name="Ohmori Y."/>
            <person name="Kawabata A."/>
            <person name="Hikiji T."/>
            <person name="Kobatake N."/>
            <person name="Inagaki H."/>
            <person name="Ikema Y."/>
            <person name="Okamoto S."/>
            <person name="Okitani R."/>
            <person name="Kawakami T."/>
            <person name="Noguchi S."/>
            <person name="Itoh T."/>
            <person name="Shigeta K."/>
            <person name="Senba T."/>
            <person name="Matsumura K."/>
            <person name="Nakajima Y."/>
            <person name="Mizuno T."/>
            <person name="Morinaga M."/>
            <person name="Sasaki M."/>
            <person name="Togashi T."/>
            <person name="Oyama M."/>
            <person name="Hata H."/>
            <person name="Watanabe M."/>
            <person name="Komatsu T."/>
            <person name="Mizushima-Sugano J."/>
            <person name="Satoh T."/>
            <person name="Shirai Y."/>
            <person name="Takahashi Y."/>
            <person name="Nakagawa K."/>
            <person name="Okumura K."/>
            <person name="Nagase T."/>
            <person name="Nomura N."/>
            <person name="Kikuchi H."/>
            <person name="Masuho Y."/>
            <person name="Yamashita R."/>
            <person name="Nakai K."/>
            <person name="Yada T."/>
            <person name="Nakamura Y."/>
            <person name="Ohara O."/>
            <person name="Isogai T."/>
            <person name="Sugano S."/>
        </authorList>
    </citation>
    <scope>NUCLEOTIDE SEQUENCE [LARGE SCALE MRNA] (ISOFORM 1)</scope>
    <scope>VARIANT PRO-444</scope>
    <source>
        <tissue>Trachea</tissue>
    </source>
</reference>
<reference key="3">
    <citation type="journal article" date="2006" name="Nature">
        <title>The DNA sequence and biological annotation of human chromosome 1.</title>
        <authorList>
            <person name="Gregory S.G."/>
            <person name="Barlow K.F."/>
            <person name="McLay K.E."/>
            <person name="Kaul R."/>
            <person name="Swarbreck D."/>
            <person name="Dunham A."/>
            <person name="Scott C.E."/>
            <person name="Howe K.L."/>
            <person name="Woodfine K."/>
            <person name="Spencer C.C.A."/>
            <person name="Jones M.C."/>
            <person name="Gillson C."/>
            <person name="Searle S."/>
            <person name="Zhou Y."/>
            <person name="Kokocinski F."/>
            <person name="McDonald L."/>
            <person name="Evans R."/>
            <person name="Phillips K."/>
            <person name="Atkinson A."/>
            <person name="Cooper R."/>
            <person name="Jones C."/>
            <person name="Hall R.E."/>
            <person name="Andrews T.D."/>
            <person name="Lloyd C."/>
            <person name="Ainscough R."/>
            <person name="Almeida J.P."/>
            <person name="Ambrose K.D."/>
            <person name="Anderson F."/>
            <person name="Andrew R.W."/>
            <person name="Ashwell R.I.S."/>
            <person name="Aubin K."/>
            <person name="Babbage A.K."/>
            <person name="Bagguley C.L."/>
            <person name="Bailey J."/>
            <person name="Beasley H."/>
            <person name="Bethel G."/>
            <person name="Bird C.P."/>
            <person name="Bray-Allen S."/>
            <person name="Brown J.Y."/>
            <person name="Brown A.J."/>
            <person name="Buckley D."/>
            <person name="Burton J."/>
            <person name="Bye J."/>
            <person name="Carder C."/>
            <person name="Chapman J.C."/>
            <person name="Clark S.Y."/>
            <person name="Clarke G."/>
            <person name="Clee C."/>
            <person name="Cobley V."/>
            <person name="Collier R.E."/>
            <person name="Corby N."/>
            <person name="Coville G.J."/>
            <person name="Davies J."/>
            <person name="Deadman R."/>
            <person name="Dunn M."/>
            <person name="Earthrowl M."/>
            <person name="Ellington A.G."/>
            <person name="Errington H."/>
            <person name="Frankish A."/>
            <person name="Frankland J."/>
            <person name="French L."/>
            <person name="Garner P."/>
            <person name="Garnett J."/>
            <person name="Gay L."/>
            <person name="Ghori M.R.J."/>
            <person name="Gibson R."/>
            <person name="Gilby L.M."/>
            <person name="Gillett W."/>
            <person name="Glithero R.J."/>
            <person name="Grafham D.V."/>
            <person name="Griffiths C."/>
            <person name="Griffiths-Jones S."/>
            <person name="Grocock R."/>
            <person name="Hammond S."/>
            <person name="Harrison E.S.I."/>
            <person name="Hart E."/>
            <person name="Haugen E."/>
            <person name="Heath P.D."/>
            <person name="Holmes S."/>
            <person name="Holt K."/>
            <person name="Howden P.J."/>
            <person name="Hunt A.R."/>
            <person name="Hunt S.E."/>
            <person name="Hunter G."/>
            <person name="Isherwood J."/>
            <person name="James R."/>
            <person name="Johnson C."/>
            <person name="Johnson D."/>
            <person name="Joy A."/>
            <person name="Kay M."/>
            <person name="Kershaw J.K."/>
            <person name="Kibukawa M."/>
            <person name="Kimberley A.M."/>
            <person name="King A."/>
            <person name="Knights A.J."/>
            <person name="Lad H."/>
            <person name="Laird G."/>
            <person name="Lawlor S."/>
            <person name="Leongamornlert D.A."/>
            <person name="Lloyd D.M."/>
            <person name="Loveland J."/>
            <person name="Lovell J."/>
            <person name="Lush M.J."/>
            <person name="Lyne R."/>
            <person name="Martin S."/>
            <person name="Mashreghi-Mohammadi M."/>
            <person name="Matthews L."/>
            <person name="Matthews N.S.W."/>
            <person name="McLaren S."/>
            <person name="Milne S."/>
            <person name="Mistry S."/>
            <person name="Moore M.J.F."/>
            <person name="Nickerson T."/>
            <person name="O'Dell C.N."/>
            <person name="Oliver K."/>
            <person name="Palmeiri A."/>
            <person name="Palmer S.A."/>
            <person name="Parker A."/>
            <person name="Patel D."/>
            <person name="Pearce A.V."/>
            <person name="Peck A.I."/>
            <person name="Pelan S."/>
            <person name="Phelps K."/>
            <person name="Phillimore B.J."/>
            <person name="Plumb R."/>
            <person name="Rajan J."/>
            <person name="Raymond C."/>
            <person name="Rouse G."/>
            <person name="Saenphimmachak C."/>
            <person name="Sehra H.K."/>
            <person name="Sheridan E."/>
            <person name="Shownkeen R."/>
            <person name="Sims S."/>
            <person name="Skuce C.D."/>
            <person name="Smith M."/>
            <person name="Steward C."/>
            <person name="Subramanian S."/>
            <person name="Sycamore N."/>
            <person name="Tracey A."/>
            <person name="Tromans A."/>
            <person name="Van Helmond Z."/>
            <person name="Wall M."/>
            <person name="Wallis J.M."/>
            <person name="White S."/>
            <person name="Whitehead S.L."/>
            <person name="Wilkinson J.E."/>
            <person name="Willey D.L."/>
            <person name="Williams H."/>
            <person name="Wilming L."/>
            <person name="Wray P.W."/>
            <person name="Wu Z."/>
            <person name="Coulson A."/>
            <person name="Vaudin M."/>
            <person name="Sulston J.E."/>
            <person name="Durbin R.M."/>
            <person name="Hubbard T."/>
            <person name="Wooster R."/>
            <person name="Dunham I."/>
            <person name="Carter N.P."/>
            <person name="McVean G."/>
            <person name="Ross M.T."/>
            <person name="Harrow J."/>
            <person name="Olson M.V."/>
            <person name="Beck S."/>
            <person name="Rogers J."/>
            <person name="Bentley D.R."/>
        </authorList>
    </citation>
    <scope>NUCLEOTIDE SEQUENCE [LARGE SCALE GENOMIC DNA]</scope>
</reference>
<reference key="4">
    <citation type="submission" date="2005-09" db="EMBL/GenBank/DDBJ databases">
        <authorList>
            <person name="Mural R.J."/>
            <person name="Istrail S."/>
            <person name="Sutton G.G."/>
            <person name="Florea L."/>
            <person name="Halpern A.L."/>
            <person name="Mobarry C.M."/>
            <person name="Lippert R."/>
            <person name="Walenz B."/>
            <person name="Shatkay H."/>
            <person name="Dew I."/>
            <person name="Miller J.R."/>
            <person name="Flanigan M.J."/>
            <person name="Edwards N.J."/>
            <person name="Bolanos R."/>
            <person name="Fasulo D."/>
            <person name="Halldorsson B.V."/>
            <person name="Hannenhalli S."/>
            <person name="Turner R."/>
            <person name="Yooseph S."/>
            <person name="Lu F."/>
            <person name="Nusskern D.R."/>
            <person name="Shue B.C."/>
            <person name="Zheng X.H."/>
            <person name="Zhong F."/>
            <person name="Delcher A.L."/>
            <person name="Huson D.H."/>
            <person name="Kravitz S.A."/>
            <person name="Mouchard L."/>
            <person name="Reinert K."/>
            <person name="Remington K.A."/>
            <person name="Clark A.G."/>
            <person name="Waterman M.S."/>
            <person name="Eichler E.E."/>
            <person name="Adams M.D."/>
            <person name="Hunkapiller M.W."/>
            <person name="Myers E.W."/>
            <person name="Venter J.C."/>
        </authorList>
    </citation>
    <scope>NUCLEOTIDE SEQUENCE [LARGE SCALE GENOMIC DNA]</scope>
    <scope>VARIANT PRO-444</scope>
</reference>
<reference key="5">
    <citation type="journal article" date="2004" name="Genome Res.">
        <title>The status, quality, and expansion of the NIH full-length cDNA project: the Mammalian Gene Collection (MGC).</title>
        <authorList>
            <consortium name="The MGC Project Team"/>
        </authorList>
    </citation>
    <scope>NUCLEOTIDE SEQUENCE [LARGE SCALE MRNA] (ISOFORM 1)</scope>
    <scope>VARIANT PRO-444</scope>
    <source>
        <tissue>Lung</tissue>
    </source>
</reference>
<reference key="6">
    <citation type="journal article" date="2007" name="BMC Genomics">
        <title>The full-ORF clone resource of the German cDNA consortium.</title>
        <authorList>
            <person name="Bechtel S."/>
            <person name="Rosenfelder H."/>
            <person name="Duda A."/>
            <person name="Schmidt C.P."/>
            <person name="Ernst U."/>
            <person name="Wellenreuther R."/>
            <person name="Mehrle A."/>
            <person name="Schuster C."/>
            <person name="Bahr A."/>
            <person name="Bloecker H."/>
            <person name="Heubner D."/>
            <person name="Hoerlein A."/>
            <person name="Michel G."/>
            <person name="Wedler H."/>
            <person name="Koehrer K."/>
            <person name="Ottenwaelder B."/>
            <person name="Poustka A."/>
            <person name="Wiemann S."/>
            <person name="Schupp I."/>
        </authorList>
    </citation>
    <scope>NUCLEOTIDE SEQUENCE [LARGE SCALE MRNA] OF 224-601 (ISOFORM 1)</scope>
    <scope>VARIANT PRO-444</scope>
    <source>
        <tissue>Stomach</tissue>
    </source>
</reference>
<reference key="7">
    <citation type="journal article" date="2011" name="BMC Syst. Biol.">
        <title>Initial characterization of the human central proteome.</title>
        <authorList>
            <person name="Burkard T.R."/>
            <person name="Planyavsky M."/>
            <person name="Kaupe I."/>
            <person name="Breitwieser F.P."/>
            <person name="Buerckstuemmer T."/>
            <person name="Bennett K.L."/>
            <person name="Superti-Furga G."/>
            <person name="Colinge J."/>
        </authorList>
    </citation>
    <scope>IDENTIFICATION BY MASS SPECTROMETRY [LARGE SCALE ANALYSIS]</scope>
</reference>
<reference key="8">
    <citation type="journal article" date="2013" name="J. Proteome Res.">
        <title>Toward a comprehensive characterization of a human cancer cell phosphoproteome.</title>
        <authorList>
            <person name="Zhou H."/>
            <person name="Di Palma S."/>
            <person name="Preisinger C."/>
            <person name="Peng M."/>
            <person name="Polat A.N."/>
            <person name="Heck A.J."/>
            <person name="Mohammed S."/>
        </authorList>
    </citation>
    <scope>PHOSPHORYLATION [LARGE SCALE ANALYSIS] AT SER-131; SER-133 AND SER-519</scope>
    <scope>IDENTIFICATION BY MASS SPECTROMETRY [LARGE SCALE ANALYSIS]</scope>
    <source>
        <tissue>Erythroleukemia</tissue>
    </source>
</reference>
<evidence type="ECO:0000256" key="1">
    <source>
        <dbReference type="SAM" id="MobiDB-lite"/>
    </source>
</evidence>
<evidence type="ECO:0000269" key="2">
    <source>
    </source>
</evidence>
<evidence type="ECO:0000269" key="3">
    <source>
    </source>
</evidence>
<evidence type="ECO:0000269" key="4">
    <source>
    </source>
</evidence>
<evidence type="ECO:0000269" key="5">
    <source>
    </source>
</evidence>
<evidence type="ECO:0000269" key="6">
    <source ref="4"/>
</evidence>
<evidence type="ECO:0000303" key="7">
    <source>
    </source>
</evidence>
<evidence type="ECO:0000305" key="8"/>
<evidence type="ECO:0007744" key="9">
    <source>
    </source>
</evidence>
<keyword id="KW-0025">Alternative splicing</keyword>
<keyword id="KW-0963">Cytoplasm</keyword>
<keyword id="KW-0597">Phosphoprotein</keyword>
<keyword id="KW-1267">Proteomics identification</keyword>
<keyword id="KW-0675">Receptor</keyword>
<keyword id="KW-1185">Reference proteome</keyword>
<feature type="chain" id="PRO_0000318575" description="Specifically androgen-regulated gene protein">
    <location>
        <begin position="1"/>
        <end position="601"/>
    </location>
</feature>
<feature type="region of interest" description="Disordered" evidence="1">
    <location>
        <begin position="1"/>
        <end position="41"/>
    </location>
</feature>
<feature type="region of interest" description="Disordered" evidence="1">
    <location>
        <begin position="56"/>
        <end position="538"/>
    </location>
</feature>
<feature type="region of interest" description="Disordered" evidence="1">
    <location>
        <begin position="551"/>
        <end position="601"/>
    </location>
</feature>
<feature type="compositionally biased region" description="Low complexity" evidence="1">
    <location>
        <begin position="20"/>
        <end position="39"/>
    </location>
</feature>
<feature type="compositionally biased region" description="Polar residues" evidence="1">
    <location>
        <begin position="100"/>
        <end position="118"/>
    </location>
</feature>
<feature type="compositionally biased region" description="Polar residues" evidence="1">
    <location>
        <begin position="142"/>
        <end position="157"/>
    </location>
</feature>
<feature type="compositionally biased region" description="Low complexity" evidence="1">
    <location>
        <begin position="174"/>
        <end position="190"/>
    </location>
</feature>
<feature type="compositionally biased region" description="Basic and acidic residues" evidence="1">
    <location>
        <begin position="203"/>
        <end position="213"/>
    </location>
</feature>
<feature type="compositionally biased region" description="Polar residues" evidence="1">
    <location>
        <begin position="224"/>
        <end position="236"/>
    </location>
</feature>
<feature type="compositionally biased region" description="Polar residues" evidence="1">
    <location>
        <begin position="307"/>
        <end position="316"/>
    </location>
</feature>
<feature type="compositionally biased region" description="Basic and acidic residues" evidence="1">
    <location>
        <begin position="342"/>
        <end position="352"/>
    </location>
</feature>
<feature type="compositionally biased region" description="Low complexity" evidence="1">
    <location>
        <begin position="384"/>
        <end position="414"/>
    </location>
</feature>
<feature type="compositionally biased region" description="Pro residues" evidence="1">
    <location>
        <begin position="415"/>
        <end position="429"/>
    </location>
</feature>
<feature type="compositionally biased region" description="Polar residues" evidence="1">
    <location>
        <begin position="464"/>
        <end position="485"/>
    </location>
</feature>
<feature type="compositionally biased region" description="Basic and acidic residues" evidence="1">
    <location>
        <begin position="585"/>
        <end position="601"/>
    </location>
</feature>
<feature type="modified residue" description="Phosphoserine" evidence="9">
    <location>
        <position position="131"/>
    </location>
</feature>
<feature type="modified residue" description="Phosphoserine" evidence="9">
    <location>
        <position position="133"/>
    </location>
</feature>
<feature type="modified residue" description="Phosphoserine" evidence="9">
    <location>
        <position position="519"/>
    </location>
</feature>
<feature type="splice variant" id="VSP_031228" description="In isoform 2." evidence="7">
    <location>
        <begin position="1"/>
        <end position="246"/>
    </location>
</feature>
<feature type="sequence variant" id="VAR_038775" description="In dbSNP:rs706846.">
    <original>P</original>
    <variation>S</variation>
    <location>
        <position position="87"/>
    </location>
</feature>
<feature type="sequence variant" id="VAR_038776" description="In dbSNP:rs35299018.">
    <original>T</original>
    <variation>A</variation>
    <location>
        <position position="107"/>
    </location>
</feature>
<feature type="sequence variant" id="VAR_038777" description="In dbSNP:rs34660159.">
    <original>N</original>
    <variation>T</variation>
    <location>
        <position position="157"/>
    </location>
</feature>
<feature type="sequence variant" id="VAR_038778" description="In dbSNP:rs12062114.">
    <original>R</original>
    <variation>G</variation>
    <location>
        <position position="258"/>
    </location>
</feature>
<feature type="sequence variant" id="VAR_038779" description="In dbSNP:rs35267170.">
    <original>N</original>
    <variation>S</variation>
    <location>
        <position position="434"/>
    </location>
</feature>
<feature type="sequence variant" id="VAR_038780" description="In dbSNP:rs2842726." evidence="2 3 4 5 6">
    <original>S</original>
    <variation>P</variation>
    <location>
        <position position="444"/>
    </location>
</feature>
<feature type="sequence variant" id="VAR_038781" description="In dbSNP:rs11799966.">
    <original>F</original>
    <variation>S</variation>
    <location>
        <position position="514"/>
    </location>
</feature>
<name>SARG_HUMAN</name>
<sequence>MPERELWPAGTGSEPVTRVGSCDSMMSSTSTRSGSSDSSYDFLSTEEKECLLFLEETIGSLDTEADSGLSTDESEPATTPRGFRALPITQPTPRGGPEETITQQGRTPRTVTESSSSHPPEPQGLGLRSGSYSLPRNIHIARSQNFRKSTTQASSHNPGEPGRLAPEPEKEQVSQSSQPRQAPASPQEAALDLDVVLIPPPEAFRDTQPEQCREASLPEGPGQQGHTPQLHTPSSSQEREQTPSEAMSQKAKETVSTRYTQPQPPPAGLPQNARAEDAPLSSGEDPNSRLAPLTTPKPRKLPPNIVLKSSRSSFHSDPQHWLSRHTEAAPGDSGLISCSLQEQRKARKEALEKLGLPQDQDEPGLHLSKPTSSIRPKETRAQHLSPAPGLAQPAAPAQASAAIPAAGKALAQAPAPAPGPAQGPLPMKSPAPGNVAASKSMPISIPKAPRANSALTPPKPESGLTLQESNTPGLRQMNFKSNTLERSGVGLSSYLSTEKDASPKTSTSLGKGSFLDKISPSVLRNSRPRPASLGTGKDFAGIQVGKLADLEQEQSSKRLSYQGQSRDKLPRPPCVSVKISPKGVPNEHRREALKKLGLLKE</sequence>
<organism>
    <name type="scientific">Homo sapiens</name>
    <name type="common">Human</name>
    <dbReference type="NCBI Taxonomy" id="9606"/>
    <lineage>
        <taxon>Eukaryota</taxon>
        <taxon>Metazoa</taxon>
        <taxon>Chordata</taxon>
        <taxon>Craniata</taxon>
        <taxon>Vertebrata</taxon>
        <taxon>Euteleostomi</taxon>
        <taxon>Mammalia</taxon>
        <taxon>Eutheria</taxon>
        <taxon>Euarchontoglires</taxon>
        <taxon>Primates</taxon>
        <taxon>Haplorrhini</taxon>
        <taxon>Catarrhini</taxon>
        <taxon>Hominidae</taxon>
        <taxon>Homo</taxon>
    </lineage>
</organism>